<dbReference type="EC" id="6.-.-.-" evidence="1"/>
<dbReference type="EMBL" id="CP000703">
    <property type="protein sequence ID" value="ABQ49036.1"/>
    <property type="molecule type" value="Genomic_DNA"/>
</dbReference>
<dbReference type="RefSeq" id="WP_000340465.1">
    <property type="nucleotide sequence ID" value="NC_009487.1"/>
</dbReference>
<dbReference type="SMR" id="A5IS63"/>
<dbReference type="KEGG" id="saj:SaurJH9_1236"/>
<dbReference type="HOGENOM" id="CLU_022249_0_0_9"/>
<dbReference type="GO" id="GO:0016874">
    <property type="term" value="F:ligase activity"/>
    <property type="evidence" value="ECO:0007669"/>
    <property type="project" value="UniProtKB-UniRule"/>
</dbReference>
<dbReference type="HAMAP" id="MF_01867">
    <property type="entry name" value="BshC"/>
    <property type="match status" value="1"/>
</dbReference>
<dbReference type="InterPro" id="IPR011199">
    <property type="entry name" value="Bacillithiol_biosynth_BshC"/>
</dbReference>
<dbReference type="InterPro" id="IPR055399">
    <property type="entry name" value="CC_BshC"/>
</dbReference>
<dbReference type="InterPro" id="IPR055398">
    <property type="entry name" value="Rossmann-like_BshC"/>
</dbReference>
<dbReference type="NCBIfam" id="TIGR03998">
    <property type="entry name" value="thiol_BshC"/>
    <property type="match status" value="1"/>
</dbReference>
<dbReference type="Pfam" id="PF24850">
    <property type="entry name" value="CC_BshC"/>
    <property type="match status" value="1"/>
</dbReference>
<dbReference type="Pfam" id="PF10079">
    <property type="entry name" value="Rossmann-like_BshC"/>
    <property type="match status" value="1"/>
</dbReference>
<dbReference type="PIRSF" id="PIRSF012535">
    <property type="entry name" value="UCP012535"/>
    <property type="match status" value="1"/>
</dbReference>
<feature type="chain" id="PRO_0000378255" description="Putative cysteine ligase BshC">
    <location>
        <begin position="1"/>
        <end position="537"/>
    </location>
</feature>
<feature type="coiled-coil region" evidence="1">
    <location>
        <begin position="422"/>
        <end position="450"/>
    </location>
</feature>
<accession>A5IS63</accession>
<evidence type="ECO:0000255" key="1">
    <source>
        <dbReference type="HAMAP-Rule" id="MF_01867"/>
    </source>
</evidence>
<gene>
    <name evidence="1" type="primary">bshC</name>
    <name type="ordered locus">SaurJH9_1236</name>
</gene>
<protein>
    <recommendedName>
        <fullName evidence="1">Putative cysteine ligase BshC</fullName>
        <ecNumber evidence="1">6.-.-.-</ecNumber>
    </recommendedName>
</protein>
<name>BSHC_STAA9</name>
<comment type="function">
    <text evidence="1">Involved in bacillithiol (BSH) biosynthesis. May catalyze the last step of the pathway, the addition of cysteine to glucosamine malate (GlcN-Mal) to generate BSH.</text>
</comment>
<comment type="similarity">
    <text evidence="1">Belongs to the BshC family.</text>
</comment>
<sequence>MDCKVVSLNEKDQFIPKIKSSDPVITGLFQYDAAQQTSFEKRMSKENNGREAALANVIREYMSDLKLSNEQELNIQHLANGSKVVIGGQQAGLFGGPLYTFHKIFSIITLSKELTDTHKQQVVPVFWIAGEDHDFDEVNHTFVYNENHGSLHKVKYHTMEMPETTVSRYYPDKAELKQTLKTMFIHMKETVHTQGLLEICDRIIDQYDSWTDMFKALLHETFKAYGVLFIDAQFEPLRKMEAPMFKKILKKHQLLDDAFRATQQRTQNQGLNAMIQTDTNVHLFLHDENMRQLVSYDGKHFKLNKTDKTYIKEEIINIAENQPELFSNNVVTRPLMEEWLFNTVAFVGGPSEIKYWAELKDVFELFDVEMPIVMPRLRITYLNDRIEKLLSKYNIPLEKVLVDGVEGERSKFIREQASHQFIEKVEGMIEQQRRLNKDLLDEVAGNQNNINLVNKNNEIHIQQYDYLLKRYLLNIERENDISMKQFREIQETLHPMGGLQERIWNPLQILNDFGTDVFKPSTYPPLSYTFDHIIIKP</sequence>
<reference key="1">
    <citation type="submission" date="2007-05" db="EMBL/GenBank/DDBJ databases">
        <title>Complete sequence of chromosome of Staphylococcus aureus subsp. aureus JH9.</title>
        <authorList>
            <consortium name="US DOE Joint Genome Institute"/>
            <person name="Copeland A."/>
            <person name="Lucas S."/>
            <person name="Lapidus A."/>
            <person name="Barry K."/>
            <person name="Detter J.C."/>
            <person name="Glavina del Rio T."/>
            <person name="Hammon N."/>
            <person name="Israni S."/>
            <person name="Pitluck S."/>
            <person name="Chain P."/>
            <person name="Malfatti S."/>
            <person name="Shin M."/>
            <person name="Vergez L."/>
            <person name="Schmutz J."/>
            <person name="Larimer F."/>
            <person name="Land M."/>
            <person name="Hauser L."/>
            <person name="Kyrpides N."/>
            <person name="Kim E."/>
            <person name="Tomasz A."/>
            <person name="Richardson P."/>
        </authorList>
    </citation>
    <scope>NUCLEOTIDE SEQUENCE [LARGE SCALE GENOMIC DNA]</scope>
    <source>
        <strain>JH9</strain>
    </source>
</reference>
<organism>
    <name type="scientific">Staphylococcus aureus (strain JH9)</name>
    <dbReference type="NCBI Taxonomy" id="359786"/>
    <lineage>
        <taxon>Bacteria</taxon>
        <taxon>Bacillati</taxon>
        <taxon>Bacillota</taxon>
        <taxon>Bacilli</taxon>
        <taxon>Bacillales</taxon>
        <taxon>Staphylococcaceae</taxon>
        <taxon>Staphylococcus</taxon>
    </lineage>
</organism>
<proteinExistence type="inferred from homology"/>
<keyword id="KW-0175">Coiled coil</keyword>
<keyword id="KW-0436">Ligase</keyword>